<feature type="chain" id="PRO_0000304711" description="Mediator of RNA polymerase II transcription subunit 17">
    <location>
        <begin position="1"/>
        <end position="638"/>
    </location>
</feature>
<feature type="region of interest" description="Disordered" evidence="2">
    <location>
        <begin position="1"/>
        <end position="21"/>
    </location>
</feature>
<reference key="1">
    <citation type="journal article" date="2005" name="Nature">
        <title>Genome sequencing and analysis of Aspergillus oryzae.</title>
        <authorList>
            <person name="Machida M."/>
            <person name="Asai K."/>
            <person name="Sano M."/>
            <person name="Tanaka T."/>
            <person name="Kumagai T."/>
            <person name="Terai G."/>
            <person name="Kusumoto K."/>
            <person name="Arima T."/>
            <person name="Akita O."/>
            <person name="Kashiwagi Y."/>
            <person name="Abe K."/>
            <person name="Gomi K."/>
            <person name="Horiuchi H."/>
            <person name="Kitamoto K."/>
            <person name="Kobayashi T."/>
            <person name="Takeuchi M."/>
            <person name="Denning D.W."/>
            <person name="Galagan J.E."/>
            <person name="Nierman W.C."/>
            <person name="Yu J."/>
            <person name="Archer D.B."/>
            <person name="Bennett J.W."/>
            <person name="Bhatnagar D."/>
            <person name="Cleveland T.E."/>
            <person name="Fedorova N.D."/>
            <person name="Gotoh O."/>
            <person name="Horikawa H."/>
            <person name="Hosoyama A."/>
            <person name="Ichinomiya M."/>
            <person name="Igarashi R."/>
            <person name="Iwashita K."/>
            <person name="Juvvadi P.R."/>
            <person name="Kato M."/>
            <person name="Kato Y."/>
            <person name="Kin T."/>
            <person name="Kokubun A."/>
            <person name="Maeda H."/>
            <person name="Maeyama N."/>
            <person name="Maruyama J."/>
            <person name="Nagasaki H."/>
            <person name="Nakajima T."/>
            <person name="Oda K."/>
            <person name="Okada K."/>
            <person name="Paulsen I."/>
            <person name="Sakamoto K."/>
            <person name="Sawano T."/>
            <person name="Takahashi M."/>
            <person name="Takase K."/>
            <person name="Terabayashi Y."/>
            <person name="Wortman J.R."/>
            <person name="Yamada O."/>
            <person name="Yamagata Y."/>
            <person name="Anazawa H."/>
            <person name="Hata Y."/>
            <person name="Koide Y."/>
            <person name="Komori T."/>
            <person name="Koyama Y."/>
            <person name="Minetoki T."/>
            <person name="Suharnan S."/>
            <person name="Tanaka A."/>
            <person name="Isono K."/>
            <person name="Kuhara S."/>
            <person name="Ogasawara N."/>
            <person name="Kikuchi H."/>
        </authorList>
    </citation>
    <scope>NUCLEOTIDE SEQUENCE [LARGE SCALE GENOMIC DNA]</scope>
    <source>
        <strain>ATCC 42149 / RIB 40</strain>
    </source>
</reference>
<keyword id="KW-0010">Activator</keyword>
<keyword id="KW-0539">Nucleus</keyword>
<keyword id="KW-1185">Reference proteome</keyword>
<keyword id="KW-0804">Transcription</keyword>
<keyword id="KW-0805">Transcription regulation</keyword>
<evidence type="ECO:0000250" key="1"/>
<evidence type="ECO:0000256" key="2">
    <source>
        <dbReference type="SAM" id="MobiDB-lite"/>
    </source>
</evidence>
<evidence type="ECO:0000305" key="3"/>
<comment type="function">
    <text evidence="1">Component of the Mediator complex, a coactivator involved in the regulated transcription of nearly all RNA polymerase II-dependent genes. Mediator functions as a bridge to convey information from gene-specific regulatory proteins to the basal RNA polymerase II transcription machinery. Mediator is recruited to promoters by direct interactions with regulatory proteins and serves as a scaffold for the assembly of a functional preinitiation complex with RNA polymerase II and the general transcription factors (By similarity).</text>
</comment>
<comment type="subunit">
    <text evidence="1">Component of the Mediator complex.</text>
</comment>
<comment type="subcellular location">
    <subcellularLocation>
        <location evidence="1">Nucleus</location>
    </subcellularLocation>
</comment>
<comment type="similarity">
    <text evidence="3">Belongs to the Mediator complex subunit 17 family.</text>
</comment>
<protein>
    <recommendedName>
        <fullName>Mediator of RNA polymerase II transcription subunit 17</fullName>
    </recommendedName>
    <alternativeName>
        <fullName>Mediator complex subunit 17</fullName>
    </alternativeName>
</protein>
<accession>Q2UJ16</accession>
<sequence length="638" mass="71749">MSDSFNLPLRPLTEKRERPDPLPVEIAQINAQYGSFRDVTEDSLRAKIEADKNKDPWFDKEENDNASADEDTTERLDQLYKRRAAITQFALQAHMEAMFALDFVSLLLSKHTPRQAEMSMSAYLKQVAPLGSLNSEIVNPPPKPESAARDTKNVSRGWRLQNFNSAASKLLDSATRLEAEVASETRYWDEVLAVKEKGWKVSRLPRERQALGVQYGFLEATPIFRDRGLAALRRTNDGSLILDKGLIPLKARTVRVRVRSRGQITGCSKNQPASDNTESIESRILQARDTVYEEELFHELVREARILGSQGVTTRQNLVQFPVSEEQEVLLDLIDSDQISPENDVVSSNEHAVVADALAHAIRILLAYAHRQNLRRRTQLPTPLTPKRRQTPEYQLLRPVMAYLQHSSHVRWLESLLNDINQILKSAGITCDFTATPFSSLSLRRTISGLPKVEALVQEFLLPYESTFSAQLVTPQSSFRVKVRTNVTTPPLGTHYEISVNMPQYPDVRPPNRIGLQDEAASILTHFVLLDILTAITHAKGSSVKGIKQETGHLLTWQAAYPHNGELLALSSTGQHKKMKVSLSRHELTVRVYSIRGIDGFGKPAVDKTPAMRSQTWKCDGTPDQPNLMDFIAEVSKE</sequence>
<name>MED17_ASPOR</name>
<dbReference type="EMBL" id="BA000050">
    <property type="protein sequence ID" value="BAE58449.1"/>
    <property type="molecule type" value="Genomic_DNA"/>
</dbReference>
<dbReference type="RefSeq" id="XP_001820451.1">
    <property type="nucleotide sequence ID" value="XM_001820399.2"/>
</dbReference>
<dbReference type="SMR" id="Q2UJ16"/>
<dbReference type="STRING" id="510516.Q2UJ16"/>
<dbReference type="EnsemblFungi" id="BAE58449">
    <property type="protein sequence ID" value="BAE58449"/>
    <property type="gene ID" value="AO090003001391"/>
</dbReference>
<dbReference type="GeneID" id="5992434"/>
<dbReference type="KEGG" id="aor:AO090003001391"/>
<dbReference type="VEuPathDB" id="FungiDB:AO090003001391"/>
<dbReference type="HOGENOM" id="CLU_015164_1_0_1"/>
<dbReference type="OMA" id="AAETKYW"/>
<dbReference type="OrthoDB" id="121728at5052"/>
<dbReference type="Proteomes" id="UP000006564">
    <property type="component" value="Chromosome 2"/>
</dbReference>
<dbReference type="GO" id="GO:0070847">
    <property type="term" value="C:core mediator complex"/>
    <property type="evidence" value="ECO:0007669"/>
    <property type="project" value="TreeGrafter"/>
</dbReference>
<dbReference type="GO" id="GO:0016592">
    <property type="term" value="C:mediator complex"/>
    <property type="evidence" value="ECO:0007669"/>
    <property type="project" value="InterPro"/>
</dbReference>
<dbReference type="GO" id="GO:0003712">
    <property type="term" value="F:transcription coregulator activity"/>
    <property type="evidence" value="ECO:0007669"/>
    <property type="project" value="InterPro"/>
</dbReference>
<dbReference type="GO" id="GO:0006357">
    <property type="term" value="P:regulation of transcription by RNA polymerase II"/>
    <property type="evidence" value="ECO:0007669"/>
    <property type="project" value="InterPro"/>
</dbReference>
<dbReference type="Gene3D" id="6.10.250.2620">
    <property type="match status" value="1"/>
</dbReference>
<dbReference type="InterPro" id="IPR019313">
    <property type="entry name" value="Mediator_Med17"/>
</dbReference>
<dbReference type="PANTHER" id="PTHR13114">
    <property type="entry name" value="MEDIATOR OF RNA POLYMERASE II TRANSCRIPTION SUBUNIT 17"/>
    <property type="match status" value="1"/>
</dbReference>
<dbReference type="PANTHER" id="PTHR13114:SF7">
    <property type="entry name" value="MEDIATOR OF RNA POLYMERASE II TRANSCRIPTION SUBUNIT 17"/>
    <property type="match status" value="1"/>
</dbReference>
<dbReference type="Pfam" id="PF10156">
    <property type="entry name" value="Med17"/>
    <property type="match status" value="1"/>
</dbReference>
<proteinExistence type="inferred from homology"/>
<gene>
    <name type="primary">srb4</name>
    <name type="synonym">med17</name>
    <name type="ORF">AO090003001391</name>
</gene>
<organism>
    <name type="scientific">Aspergillus oryzae (strain ATCC 42149 / RIB 40)</name>
    <name type="common">Yellow koji mold</name>
    <dbReference type="NCBI Taxonomy" id="510516"/>
    <lineage>
        <taxon>Eukaryota</taxon>
        <taxon>Fungi</taxon>
        <taxon>Dikarya</taxon>
        <taxon>Ascomycota</taxon>
        <taxon>Pezizomycotina</taxon>
        <taxon>Eurotiomycetes</taxon>
        <taxon>Eurotiomycetidae</taxon>
        <taxon>Eurotiales</taxon>
        <taxon>Aspergillaceae</taxon>
        <taxon>Aspergillus</taxon>
        <taxon>Aspergillus subgen. Circumdati</taxon>
    </lineage>
</organism>